<accession>B6J2Q3</accession>
<sequence length="358" mass="39974">MNRILIIAGGTGGHIFPALAVARELREQEVDVQWLGVKGGLEEKLVPDSFPLHLIQIKAFRGKRGLQQLLMPLRLVRAVFQAYRIIRQFKPDVILGMGGYVAGPGGLAAWITRTPLIIHEQNSIPGLTNRVLAKMAKFILQGFPDTFPQNRKVITTGNPVRTELVKMPLPQVRLAARRGPLRILVLGGSQGARSINQKMLAALSSYPRSEEIAVWHQTGQRDFEFIQKEYEKIKIEAKVDNFISDMAGAYGWADLVVCRAGALTVCEIASVGVASIFIPYPHAVDNHQFHNARFLEQAGAAIIISEESLTETDLMRWFEQFAQDRDRLLTMAENARKLAKPEAVQRVIAQCKKFYAAR</sequence>
<proteinExistence type="inferred from homology"/>
<feature type="chain" id="PRO_1000090425" description="UDP-N-acetylglucosamine--N-acetylmuramyl-(pentapeptide) pyrophosphoryl-undecaprenol N-acetylglucosamine transferase">
    <location>
        <begin position="1"/>
        <end position="358"/>
    </location>
</feature>
<feature type="binding site" evidence="1">
    <location>
        <begin position="11"/>
        <end position="13"/>
    </location>
    <ligand>
        <name>UDP-N-acetyl-alpha-D-glucosamine</name>
        <dbReference type="ChEBI" id="CHEBI:57705"/>
    </ligand>
</feature>
<feature type="binding site" evidence="1">
    <location>
        <position position="122"/>
    </location>
    <ligand>
        <name>UDP-N-acetyl-alpha-D-glucosamine</name>
        <dbReference type="ChEBI" id="CHEBI:57705"/>
    </ligand>
</feature>
<feature type="binding site" evidence="1">
    <location>
        <position position="161"/>
    </location>
    <ligand>
        <name>UDP-N-acetyl-alpha-D-glucosamine</name>
        <dbReference type="ChEBI" id="CHEBI:57705"/>
    </ligand>
</feature>
<feature type="binding site" evidence="1">
    <location>
        <position position="189"/>
    </location>
    <ligand>
        <name>UDP-N-acetyl-alpha-D-glucosamine</name>
        <dbReference type="ChEBI" id="CHEBI:57705"/>
    </ligand>
</feature>
<feature type="binding site" evidence="1">
    <location>
        <position position="243"/>
    </location>
    <ligand>
        <name>UDP-N-acetyl-alpha-D-glucosamine</name>
        <dbReference type="ChEBI" id="CHEBI:57705"/>
    </ligand>
</feature>
<feature type="binding site" evidence="1">
    <location>
        <begin position="262"/>
        <end position="267"/>
    </location>
    <ligand>
        <name>UDP-N-acetyl-alpha-D-glucosamine</name>
        <dbReference type="ChEBI" id="CHEBI:57705"/>
    </ligand>
</feature>
<feature type="binding site" evidence="1">
    <location>
        <position position="288"/>
    </location>
    <ligand>
        <name>UDP-N-acetyl-alpha-D-glucosamine</name>
        <dbReference type="ChEBI" id="CHEBI:57705"/>
    </ligand>
</feature>
<organism>
    <name type="scientific">Coxiella burnetii (strain CbuG_Q212)</name>
    <name type="common">Coxiella burnetii (strain Q212)</name>
    <dbReference type="NCBI Taxonomy" id="434923"/>
    <lineage>
        <taxon>Bacteria</taxon>
        <taxon>Pseudomonadati</taxon>
        <taxon>Pseudomonadota</taxon>
        <taxon>Gammaproteobacteria</taxon>
        <taxon>Legionellales</taxon>
        <taxon>Coxiellaceae</taxon>
        <taxon>Coxiella</taxon>
    </lineage>
</organism>
<dbReference type="EC" id="2.4.1.227" evidence="1"/>
<dbReference type="EMBL" id="CP001019">
    <property type="protein sequence ID" value="ACJ19130.1"/>
    <property type="molecule type" value="Genomic_DNA"/>
</dbReference>
<dbReference type="RefSeq" id="WP_005769484.1">
    <property type="nucleotide sequence ID" value="NC_011527.1"/>
</dbReference>
<dbReference type="SMR" id="B6J2Q3"/>
<dbReference type="CAZy" id="GT28">
    <property type="family name" value="Glycosyltransferase Family 28"/>
</dbReference>
<dbReference type="KEGG" id="cbg:CbuG_1881"/>
<dbReference type="HOGENOM" id="CLU_037404_2_0_6"/>
<dbReference type="UniPathway" id="UPA00219"/>
<dbReference type="GO" id="GO:0005886">
    <property type="term" value="C:plasma membrane"/>
    <property type="evidence" value="ECO:0007669"/>
    <property type="project" value="UniProtKB-SubCell"/>
</dbReference>
<dbReference type="GO" id="GO:0051991">
    <property type="term" value="F:UDP-N-acetyl-D-glucosamine:N-acetylmuramoyl-L-alanyl-D-glutamyl-meso-2,6-diaminopimelyl-D-alanyl-D-alanine-diphosphoundecaprenol 4-beta-N-acetylglucosaminlytransferase activity"/>
    <property type="evidence" value="ECO:0007669"/>
    <property type="project" value="RHEA"/>
</dbReference>
<dbReference type="GO" id="GO:0050511">
    <property type="term" value="F:undecaprenyldiphospho-muramoylpentapeptide beta-N-acetylglucosaminyltransferase activity"/>
    <property type="evidence" value="ECO:0007669"/>
    <property type="project" value="UniProtKB-UniRule"/>
</dbReference>
<dbReference type="GO" id="GO:0005975">
    <property type="term" value="P:carbohydrate metabolic process"/>
    <property type="evidence" value="ECO:0007669"/>
    <property type="project" value="InterPro"/>
</dbReference>
<dbReference type="GO" id="GO:0051301">
    <property type="term" value="P:cell division"/>
    <property type="evidence" value="ECO:0007669"/>
    <property type="project" value="UniProtKB-KW"/>
</dbReference>
<dbReference type="GO" id="GO:0071555">
    <property type="term" value="P:cell wall organization"/>
    <property type="evidence" value="ECO:0007669"/>
    <property type="project" value="UniProtKB-KW"/>
</dbReference>
<dbReference type="GO" id="GO:0030259">
    <property type="term" value="P:lipid glycosylation"/>
    <property type="evidence" value="ECO:0007669"/>
    <property type="project" value="UniProtKB-UniRule"/>
</dbReference>
<dbReference type="GO" id="GO:0009252">
    <property type="term" value="P:peptidoglycan biosynthetic process"/>
    <property type="evidence" value="ECO:0007669"/>
    <property type="project" value="UniProtKB-UniRule"/>
</dbReference>
<dbReference type="GO" id="GO:0008360">
    <property type="term" value="P:regulation of cell shape"/>
    <property type="evidence" value="ECO:0007669"/>
    <property type="project" value="UniProtKB-KW"/>
</dbReference>
<dbReference type="CDD" id="cd03785">
    <property type="entry name" value="GT28_MurG"/>
    <property type="match status" value="1"/>
</dbReference>
<dbReference type="Gene3D" id="3.40.50.2000">
    <property type="entry name" value="Glycogen Phosphorylase B"/>
    <property type="match status" value="2"/>
</dbReference>
<dbReference type="HAMAP" id="MF_00033">
    <property type="entry name" value="MurG"/>
    <property type="match status" value="1"/>
</dbReference>
<dbReference type="InterPro" id="IPR006009">
    <property type="entry name" value="GlcNAc_MurG"/>
</dbReference>
<dbReference type="InterPro" id="IPR007235">
    <property type="entry name" value="Glyco_trans_28_C"/>
</dbReference>
<dbReference type="InterPro" id="IPR004276">
    <property type="entry name" value="GlycoTrans_28_N"/>
</dbReference>
<dbReference type="NCBIfam" id="TIGR01133">
    <property type="entry name" value="murG"/>
    <property type="match status" value="1"/>
</dbReference>
<dbReference type="PANTHER" id="PTHR21015:SF22">
    <property type="entry name" value="GLYCOSYLTRANSFERASE"/>
    <property type="match status" value="1"/>
</dbReference>
<dbReference type="PANTHER" id="PTHR21015">
    <property type="entry name" value="UDP-N-ACETYLGLUCOSAMINE--N-ACETYLMURAMYL-(PENTAPEPTIDE) PYROPHOSPHORYL-UNDECAPRENOL N-ACETYLGLUCOSAMINE TRANSFERASE 1"/>
    <property type="match status" value="1"/>
</dbReference>
<dbReference type="Pfam" id="PF04101">
    <property type="entry name" value="Glyco_tran_28_C"/>
    <property type="match status" value="1"/>
</dbReference>
<dbReference type="Pfam" id="PF03033">
    <property type="entry name" value="Glyco_transf_28"/>
    <property type="match status" value="1"/>
</dbReference>
<dbReference type="SUPFAM" id="SSF53756">
    <property type="entry name" value="UDP-Glycosyltransferase/glycogen phosphorylase"/>
    <property type="match status" value="1"/>
</dbReference>
<name>MURG_COXB2</name>
<protein>
    <recommendedName>
        <fullName evidence="1">UDP-N-acetylglucosamine--N-acetylmuramyl-(pentapeptide) pyrophosphoryl-undecaprenol N-acetylglucosamine transferase</fullName>
        <ecNumber evidence="1">2.4.1.227</ecNumber>
    </recommendedName>
    <alternativeName>
        <fullName evidence="1">Undecaprenyl-PP-MurNAc-pentapeptide-UDPGlcNAc GlcNAc transferase</fullName>
    </alternativeName>
</protein>
<keyword id="KW-0131">Cell cycle</keyword>
<keyword id="KW-0132">Cell division</keyword>
<keyword id="KW-0997">Cell inner membrane</keyword>
<keyword id="KW-1003">Cell membrane</keyword>
<keyword id="KW-0133">Cell shape</keyword>
<keyword id="KW-0961">Cell wall biogenesis/degradation</keyword>
<keyword id="KW-0328">Glycosyltransferase</keyword>
<keyword id="KW-0472">Membrane</keyword>
<keyword id="KW-0573">Peptidoglycan synthesis</keyword>
<keyword id="KW-0808">Transferase</keyword>
<comment type="function">
    <text evidence="1">Cell wall formation. Catalyzes the transfer of a GlcNAc subunit on undecaprenyl-pyrophosphoryl-MurNAc-pentapeptide (lipid intermediate I) to form undecaprenyl-pyrophosphoryl-MurNAc-(pentapeptide)GlcNAc (lipid intermediate II).</text>
</comment>
<comment type="catalytic activity">
    <reaction evidence="1">
        <text>di-trans,octa-cis-undecaprenyl diphospho-N-acetyl-alpha-D-muramoyl-L-alanyl-D-glutamyl-meso-2,6-diaminopimeloyl-D-alanyl-D-alanine + UDP-N-acetyl-alpha-D-glucosamine = di-trans,octa-cis-undecaprenyl diphospho-[N-acetyl-alpha-D-glucosaminyl-(1-&gt;4)]-N-acetyl-alpha-D-muramoyl-L-alanyl-D-glutamyl-meso-2,6-diaminopimeloyl-D-alanyl-D-alanine + UDP + H(+)</text>
        <dbReference type="Rhea" id="RHEA:31227"/>
        <dbReference type="ChEBI" id="CHEBI:15378"/>
        <dbReference type="ChEBI" id="CHEBI:57705"/>
        <dbReference type="ChEBI" id="CHEBI:58223"/>
        <dbReference type="ChEBI" id="CHEBI:61387"/>
        <dbReference type="ChEBI" id="CHEBI:61388"/>
        <dbReference type="EC" id="2.4.1.227"/>
    </reaction>
</comment>
<comment type="pathway">
    <text evidence="1">Cell wall biogenesis; peptidoglycan biosynthesis.</text>
</comment>
<comment type="subcellular location">
    <subcellularLocation>
        <location evidence="1">Cell inner membrane</location>
        <topology evidence="1">Peripheral membrane protein</topology>
        <orientation evidence="1">Cytoplasmic side</orientation>
    </subcellularLocation>
</comment>
<comment type="similarity">
    <text evidence="1">Belongs to the glycosyltransferase 28 family. MurG subfamily.</text>
</comment>
<gene>
    <name evidence="1" type="primary">murG</name>
    <name type="ordered locus">CbuG_1881</name>
</gene>
<evidence type="ECO:0000255" key="1">
    <source>
        <dbReference type="HAMAP-Rule" id="MF_00033"/>
    </source>
</evidence>
<reference key="1">
    <citation type="journal article" date="2009" name="Infect. Immun.">
        <title>Comparative genomics reveal extensive transposon-mediated genomic plasticity and diversity among potential effector proteins within the genus Coxiella.</title>
        <authorList>
            <person name="Beare P.A."/>
            <person name="Unsworth N."/>
            <person name="Andoh M."/>
            <person name="Voth D.E."/>
            <person name="Omsland A."/>
            <person name="Gilk S.D."/>
            <person name="Williams K.P."/>
            <person name="Sobral B.W."/>
            <person name="Kupko J.J. III"/>
            <person name="Porcella S.F."/>
            <person name="Samuel J.E."/>
            <person name="Heinzen R.A."/>
        </authorList>
    </citation>
    <scope>NUCLEOTIDE SEQUENCE [LARGE SCALE GENOMIC DNA]</scope>
    <source>
        <strain>CbuG_Q212</strain>
    </source>
</reference>